<reference key="1">
    <citation type="journal article" date="2009" name="Biochemistry">
        <title>Novel alpha D-conopeptides and their precursors identified by cDNA cloning define the D-conotoxin superfamily.</title>
        <authorList>
            <person name="Loughnan M.L."/>
            <person name="Nicke A."/>
            <person name="Lawrence N."/>
            <person name="Lewis R.J."/>
        </authorList>
    </citation>
    <scope>NUCLEOTIDE SEQUENCE [MRNA]</scope>
    <source>
        <tissue>Venom duct</tissue>
    </source>
</reference>
<reference key="2">
    <citation type="unpublished observations" date="2009-12">
        <authorList>
            <person name="Loughnan M.L."/>
            <person name="Lewis R.J."/>
        </authorList>
    </citation>
    <scope>PARTIAL PROTEIN SEQUENCE</scope>
    <scope>NON-HYDROXYLATED PRO-55</scope>
    <source>
        <tissue>Venom</tissue>
    </source>
</reference>
<proteinExistence type="evidence at protein level"/>
<dbReference type="SMR" id="P0CE24"/>
<dbReference type="GO" id="GO:0005576">
    <property type="term" value="C:extracellular region"/>
    <property type="evidence" value="ECO:0007669"/>
    <property type="project" value="UniProtKB-SubCell"/>
</dbReference>
<dbReference type="GO" id="GO:0035792">
    <property type="term" value="C:host cell postsynaptic membrane"/>
    <property type="evidence" value="ECO:0007669"/>
    <property type="project" value="UniProtKB-KW"/>
</dbReference>
<dbReference type="GO" id="GO:0030550">
    <property type="term" value="F:acetylcholine receptor inhibitor activity"/>
    <property type="evidence" value="ECO:0007669"/>
    <property type="project" value="UniProtKB-KW"/>
</dbReference>
<dbReference type="GO" id="GO:0099106">
    <property type="term" value="F:ion channel regulator activity"/>
    <property type="evidence" value="ECO:0007669"/>
    <property type="project" value="UniProtKB-KW"/>
</dbReference>
<dbReference type="GO" id="GO:0090729">
    <property type="term" value="F:toxin activity"/>
    <property type="evidence" value="ECO:0007669"/>
    <property type="project" value="UniProtKB-KW"/>
</dbReference>
<comment type="function">
    <text evidence="4">Alpha-conotoxins act on postsynaptic membranes, they bind to the nicotinic acetylcholine receptors (nAChR) and thus inhibit them. Through its two C-terminal domains, this homodimeric protein would bind to two nAChR allosteric sites, located outside the nAChR C-loop of the principal binding face and at the adjacent binding interface in a clockwise direction. This toxin specifically blocks mammalian neuronal nAChR of the alpha-7/CHRNA7, alpha-3-beta-2/CHRNA3-CHRNB2 and alpha-4-beta-2/CHRNA4-CHRNB2 subtypes.</text>
</comment>
<comment type="subunit">
    <text evidence="3">Hetero-, homo- or pseudo-homodimer (identical sequence, different post-translational modifications).</text>
</comment>
<comment type="subcellular location">
    <subcellularLocation>
        <location>Secreted</location>
    </subcellularLocation>
</comment>
<comment type="tissue specificity">
    <text>Expressed by the venom duct.</text>
</comment>
<comment type="domain">
    <text>The cysteine framework is XX (C-CC-C-CC-C-C-C-C).</text>
</comment>
<comment type="domain">
    <text evidence="4">Displays a mini-granulin fold, a structure composed of two short, stacked beta-hairpins connected by two parallel disulfide bonds. This newly described fold is derived from the same cysteine connectivity as knottins (ICK fold). The name 'mini-granulin fold' comes from the structural homology with the N-terminal region of the human granulin.</text>
</comment>
<comment type="similarity">
    <text evidence="6">Belongs to the conotoxin D superfamily.</text>
</comment>
<organism>
    <name type="scientific">Conus capitaneus</name>
    <name type="common">Captain cone</name>
    <dbReference type="NCBI Taxonomy" id="89439"/>
    <lineage>
        <taxon>Eukaryota</taxon>
        <taxon>Metazoa</taxon>
        <taxon>Spiralia</taxon>
        <taxon>Lophotrochozoa</taxon>
        <taxon>Mollusca</taxon>
        <taxon>Gastropoda</taxon>
        <taxon>Caenogastropoda</taxon>
        <taxon>Neogastropoda</taxon>
        <taxon>Conoidea</taxon>
        <taxon>Conidae</taxon>
        <taxon>Conus</taxon>
        <taxon>Rhizoconus</taxon>
    </lineage>
</organism>
<protein>
    <recommendedName>
        <fullName>Alpha-conotoxin-like Cp20.1</fullName>
    </recommendedName>
</protein>
<accession>P0CE24</accession>
<keyword id="KW-0008">Acetylcholine receptor inhibiting toxin</keyword>
<keyword id="KW-0903">Direct protein sequencing</keyword>
<keyword id="KW-1015">Disulfide bond</keyword>
<keyword id="KW-0872">Ion channel impairing toxin</keyword>
<keyword id="KW-0528">Neurotoxin</keyword>
<keyword id="KW-0629">Postsynaptic neurotoxin</keyword>
<keyword id="KW-0964">Secreted</keyword>
<keyword id="KW-0732">Signal</keyword>
<keyword id="KW-0800">Toxin</keyword>
<evidence type="ECO:0000250" key="1"/>
<evidence type="ECO:0000250" key="2">
    <source>
        <dbReference type="UniProtKB" id="A0A0A0VBX4"/>
    </source>
</evidence>
<evidence type="ECO:0000250" key="3">
    <source>
        <dbReference type="UniProtKB" id="C3VVN5"/>
    </source>
</evidence>
<evidence type="ECO:0000250" key="4">
    <source>
        <dbReference type="UniProtKB" id="P0C1W6"/>
    </source>
</evidence>
<evidence type="ECO:0000255" key="5"/>
<evidence type="ECO:0000305" key="6"/>
<sequence length="92" mass="10113">MPKLEMMLLVLLIFPLSYFIAAGGQVVQVDRRGDGLAGYLQRGDRDVQDCQVSTPGSKWGRCCLNRVCGPMCCPASHCYCVYHRGRGHGCSC</sequence>
<name>CXAT1_CONCE</name>
<feature type="signal peptide" evidence="5">
    <location>
        <begin position="1"/>
        <end position="24"/>
    </location>
</feature>
<feature type="propeptide" id="PRO_0000391806" evidence="1">
    <location>
        <begin position="25"/>
        <end position="45"/>
    </location>
</feature>
<feature type="chain" id="PRO_0000391807" description="Alpha-conotoxin-like Cp20.1">
    <location>
        <begin position="46"/>
        <end position="92"/>
    </location>
</feature>
<feature type="disulfide bond" description="Interchain (with C-63)" evidence="2">
    <location>
        <position position="50"/>
    </location>
</feature>
<feature type="disulfide bond" description="Interchain (with C-51)" evidence="2">
    <location>
        <position position="62"/>
    </location>
</feature>
<feature type="disulfide bond" evidence="2">
    <location>
        <begin position="63"/>
        <end position="72"/>
    </location>
</feature>
<feature type="disulfide bond" evidence="2">
    <location>
        <begin position="68"/>
        <end position="80"/>
    </location>
</feature>
<feature type="disulfide bond" evidence="2">
    <location>
        <begin position="73"/>
        <end position="90"/>
    </location>
</feature>
<feature type="disulfide bond" evidence="2">
    <location>
        <begin position="78"/>
        <end position="92"/>
    </location>
</feature>